<name>DELE1_RAT</name>
<organism>
    <name type="scientific">Rattus norvegicus</name>
    <name type="common">Rat</name>
    <dbReference type="NCBI Taxonomy" id="10116"/>
    <lineage>
        <taxon>Eukaryota</taxon>
        <taxon>Metazoa</taxon>
        <taxon>Chordata</taxon>
        <taxon>Craniata</taxon>
        <taxon>Vertebrata</taxon>
        <taxon>Euteleostomi</taxon>
        <taxon>Mammalia</taxon>
        <taxon>Eutheria</taxon>
        <taxon>Euarchontoglires</taxon>
        <taxon>Glires</taxon>
        <taxon>Rodentia</taxon>
        <taxon>Myomorpha</taxon>
        <taxon>Muroidea</taxon>
        <taxon>Muridae</taxon>
        <taxon>Murinae</taxon>
        <taxon>Rattus</taxon>
    </lineage>
</organism>
<gene>
    <name evidence="5" type="primary">Dele1</name>
    <name evidence="1" type="synonym">Dele</name>
</gene>
<proteinExistence type="evidence at transcript level"/>
<evidence type="ECO:0000250" key="1">
    <source>
        <dbReference type="UniProtKB" id="Q14154"/>
    </source>
</evidence>
<evidence type="ECO:0000255" key="2"/>
<evidence type="ECO:0000256" key="3">
    <source>
        <dbReference type="SAM" id="MobiDB-lite"/>
    </source>
</evidence>
<evidence type="ECO:0000305" key="4"/>
<evidence type="ECO:0000312" key="5">
    <source>
        <dbReference type="RGD" id="735029"/>
    </source>
</evidence>
<feature type="transit peptide" description="Mitochondrion" evidence="2">
    <location>
        <begin position="1"/>
        <end position="23"/>
    </location>
</feature>
<feature type="propeptide" id="PRO_0000459062" description="Extended MTS" evidence="1">
    <location>
        <begin position="24"/>
        <end position="101"/>
    </location>
</feature>
<feature type="chain" id="PRO_0000050723" description="DAP3-binding cell death enhancer 1">
    <location>
        <begin position="102"/>
        <end position="509"/>
    </location>
</feature>
<feature type="chain" id="PRO_0000450310" description="DAP3-binding cell death enhancer 1 short form" evidence="1">
    <location>
        <begin position="143" status="uncertain"/>
        <end position="509"/>
    </location>
</feature>
<feature type="repeat" description="TPR 1" evidence="2">
    <location>
        <begin position="213"/>
        <end position="245"/>
    </location>
</feature>
<feature type="repeat" description="TPR 2" evidence="2">
    <location>
        <begin position="246"/>
        <end position="278"/>
    </location>
</feature>
<feature type="repeat" description="TPR 3" evidence="2">
    <location>
        <begin position="279"/>
        <end position="313"/>
    </location>
</feature>
<feature type="repeat" description="TPR 4" evidence="2">
    <location>
        <begin position="314"/>
        <end position="351"/>
    </location>
</feature>
<feature type="repeat" description="TPR 5" evidence="2">
    <location>
        <begin position="352"/>
        <end position="385"/>
    </location>
</feature>
<feature type="repeat" description="TPR 6" evidence="2">
    <location>
        <begin position="386"/>
        <end position="423"/>
    </location>
</feature>
<feature type="repeat" description="TPR 7" evidence="2">
    <location>
        <begin position="470"/>
        <end position="498"/>
    </location>
</feature>
<feature type="region of interest" description="Disordered" evidence="3">
    <location>
        <begin position="19"/>
        <end position="60"/>
    </location>
</feature>
<feature type="region of interest" description="Disordered" evidence="3">
    <location>
        <begin position="143"/>
        <end position="185"/>
    </location>
</feature>
<feature type="short sequence motif" description="SIFI-degron" evidence="1">
    <location>
        <begin position="307"/>
        <end position="326"/>
    </location>
</feature>
<feature type="compositionally biased region" description="Polar residues" evidence="3">
    <location>
        <begin position="26"/>
        <end position="40"/>
    </location>
</feature>
<feature type="compositionally biased region" description="Basic and acidic residues" evidence="3">
    <location>
        <begin position="46"/>
        <end position="60"/>
    </location>
</feature>
<feature type="compositionally biased region" description="Basic and acidic residues" evidence="3">
    <location>
        <begin position="156"/>
        <end position="168"/>
    </location>
</feature>
<feature type="site" description="Cleavage; by OMA1" evidence="1">
    <location>
        <begin position="142"/>
        <end position="143"/>
    </location>
</feature>
<feature type="sequence conflict" description="In Ref. 3; AAH64660." ref="3">
    <original>P</original>
    <variation>L</variation>
    <location>
        <position position="41"/>
    </location>
</feature>
<feature type="sequence conflict" description="In Ref. 3; AAH64660." ref="3">
    <original>H</original>
    <variation>Y</variation>
    <location>
        <position position="142"/>
    </location>
</feature>
<accession>P60924</accession>
<accession>G3V8I7</accession>
<keyword id="KW-0053">Apoptosis</keyword>
<keyword id="KW-0963">Cytoplasm</keyword>
<keyword id="KW-0227">DNA damage</keyword>
<keyword id="KW-0472">Membrane</keyword>
<keyword id="KW-0496">Mitochondrion</keyword>
<keyword id="KW-0999">Mitochondrion inner membrane</keyword>
<keyword id="KW-1000">Mitochondrion outer membrane</keyword>
<keyword id="KW-1185">Reference proteome</keyword>
<keyword id="KW-0677">Repeat</keyword>
<keyword id="KW-0802">TPR repeat</keyword>
<keyword id="KW-0809">Transit peptide</keyword>
<keyword id="KW-0832">Ubl conjugation</keyword>
<protein>
    <recommendedName>
        <fullName evidence="5">DAP3-binding cell death enhancer 1</fullName>
    </recommendedName>
    <alternativeName>
        <fullName evidence="1">DAP3-binding cell death enhancer 1, long form</fullName>
        <shortName evidence="1">DELE1(L)</shortName>
    </alternativeName>
    <alternativeName>
        <fullName evidence="1">Death ligand signal enhancer</fullName>
    </alternativeName>
    <component>
        <recommendedName>
            <fullName evidence="1">DAP3-binding cell death enhancer 1 short form</fullName>
            <shortName evidence="1">DELE1(S)</shortName>
            <shortName evidence="1">S-DELE1</shortName>
        </recommendedName>
    </component>
</protein>
<reference key="1">
    <citation type="journal article" date="2004" name="Nature">
        <title>Genome sequence of the Brown Norway rat yields insights into mammalian evolution.</title>
        <authorList>
            <person name="Gibbs R.A."/>
            <person name="Weinstock G.M."/>
            <person name="Metzker M.L."/>
            <person name="Muzny D.M."/>
            <person name="Sodergren E.J."/>
            <person name="Scherer S."/>
            <person name="Scott G."/>
            <person name="Steffen D."/>
            <person name="Worley K.C."/>
            <person name="Burch P.E."/>
            <person name="Okwuonu G."/>
            <person name="Hines S."/>
            <person name="Lewis L."/>
            <person name="Deramo C."/>
            <person name="Delgado O."/>
            <person name="Dugan-Rocha S."/>
            <person name="Miner G."/>
            <person name="Morgan M."/>
            <person name="Hawes A."/>
            <person name="Gill R."/>
            <person name="Holt R.A."/>
            <person name="Adams M.D."/>
            <person name="Amanatides P.G."/>
            <person name="Baden-Tillson H."/>
            <person name="Barnstead M."/>
            <person name="Chin S."/>
            <person name="Evans C.A."/>
            <person name="Ferriera S."/>
            <person name="Fosler C."/>
            <person name="Glodek A."/>
            <person name="Gu Z."/>
            <person name="Jennings D."/>
            <person name="Kraft C.L."/>
            <person name="Nguyen T."/>
            <person name="Pfannkoch C.M."/>
            <person name="Sitter C."/>
            <person name="Sutton G.G."/>
            <person name="Venter J.C."/>
            <person name="Woodage T."/>
            <person name="Smith D."/>
            <person name="Lee H.-M."/>
            <person name="Gustafson E."/>
            <person name="Cahill P."/>
            <person name="Kana A."/>
            <person name="Doucette-Stamm L."/>
            <person name="Weinstock K."/>
            <person name="Fechtel K."/>
            <person name="Weiss R.B."/>
            <person name="Dunn D.M."/>
            <person name="Green E.D."/>
            <person name="Blakesley R.W."/>
            <person name="Bouffard G.G."/>
            <person name="De Jong P.J."/>
            <person name="Osoegawa K."/>
            <person name="Zhu B."/>
            <person name="Marra M."/>
            <person name="Schein J."/>
            <person name="Bosdet I."/>
            <person name="Fjell C."/>
            <person name="Jones S."/>
            <person name="Krzywinski M."/>
            <person name="Mathewson C."/>
            <person name="Siddiqui A."/>
            <person name="Wye N."/>
            <person name="McPherson J."/>
            <person name="Zhao S."/>
            <person name="Fraser C.M."/>
            <person name="Shetty J."/>
            <person name="Shatsman S."/>
            <person name="Geer K."/>
            <person name="Chen Y."/>
            <person name="Abramzon S."/>
            <person name="Nierman W.C."/>
            <person name="Havlak P.H."/>
            <person name="Chen R."/>
            <person name="Durbin K.J."/>
            <person name="Egan A."/>
            <person name="Ren Y."/>
            <person name="Song X.-Z."/>
            <person name="Li B."/>
            <person name="Liu Y."/>
            <person name="Qin X."/>
            <person name="Cawley S."/>
            <person name="Cooney A.J."/>
            <person name="D'Souza L.M."/>
            <person name="Martin K."/>
            <person name="Wu J.Q."/>
            <person name="Gonzalez-Garay M.L."/>
            <person name="Jackson A.R."/>
            <person name="Kalafus K.J."/>
            <person name="McLeod M.P."/>
            <person name="Milosavljevic A."/>
            <person name="Virk D."/>
            <person name="Volkov A."/>
            <person name="Wheeler D.A."/>
            <person name="Zhang Z."/>
            <person name="Bailey J.A."/>
            <person name="Eichler E.E."/>
            <person name="Tuzun E."/>
            <person name="Birney E."/>
            <person name="Mongin E."/>
            <person name="Ureta-Vidal A."/>
            <person name="Woodwark C."/>
            <person name="Zdobnov E."/>
            <person name="Bork P."/>
            <person name="Suyama M."/>
            <person name="Torrents D."/>
            <person name="Alexandersson M."/>
            <person name="Trask B.J."/>
            <person name="Young J.M."/>
            <person name="Huang H."/>
            <person name="Wang H."/>
            <person name="Xing H."/>
            <person name="Daniels S."/>
            <person name="Gietzen D."/>
            <person name="Schmidt J."/>
            <person name="Stevens K."/>
            <person name="Vitt U."/>
            <person name="Wingrove J."/>
            <person name="Camara F."/>
            <person name="Mar Alba M."/>
            <person name="Abril J.F."/>
            <person name="Guigo R."/>
            <person name="Smit A."/>
            <person name="Dubchak I."/>
            <person name="Rubin E.M."/>
            <person name="Couronne O."/>
            <person name="Poliakov A."/>
            <person name="Huebner N."/>
            <person name="Ganten D."/>
            <person name="Goesele C."/>
            <person name="Hummel O."/>
            <person name="Kreitler T."/>
            <person name="Lee Y.-A."/>
            <person name="Monti J."/>
            <person name="Schulz H."/>
            <person name="Zimdahl H."/>
            <person name="Himmelbauer H."/>
            <person name="Lehrach H."/>
            <person name="Jacob H.J."/>
            <person name="Bromberg S."/>
            <person name="Gullings-Handley J."/>
            <person name="Jensen-Seaman M.I."/>
            <person name="Kwitek A.E."/>
            <person name="Lazar J."/>
            <person name="Pasko D."/>
            <person name="Tonellato P.J."/>
            <person name="Twigger S."/>
            <person name="Ponting C.P."/>
            <person name="Duarte J.M."/>
            <person name="Rice S."/>
            <person name="Goodstadt L."/>
            <person name="Beatson S.A."/>
            <person name="Emes R.D."/>
            <person name="Winter E.E."/>
            <person name="Webber C."/>
            <person name="Brandt P."/>
            <person name="Nyakatura G."/>
            <person name="Adetobi M."/>
            <person name="Chiaromonte F."/>
            <person name="Elnitski L."/>
            <person name="Eswara P."/>
            <person name="Hardison R.C."/>
            <person name="Hou M."/>
            <person name="Kolbe D."/>
            <person name="Makova K."/>
            <person name="Miller W."/>
            <person name="Nekrutenko A."/>
            <person name="Riemer C."/>
            <person name="Schwartz S."/>
            <person name="Taylor J."/>
            <person name="Yang S."/>
            <person name="Zhang Y."/>
            <person name="Lindpaintner K."/>
            <person name="Andrews T.D."/>
            <person name="Caccamo M."/>
            <person name="Clamp M."/>
            <person name="Clarke L."/>
            <person name="Curwen V."/>
            <person name="Durbin R.M."/>
            <person name="Eyras E."/>
            <person name="Searle S.M."/>
            <person name="Cooper G.M."/>
            <person name="Batzoglou S."/>
            <person name="Brudno M."/>
            <person name="Sidow A."/>
            <person name="Stone E.A."/>
            <person name="Payseur B.A."/>
            <person name="Bourque G."/>
            <person name="Lopez-Otin C."/>
            <person name="Puente X.S."/>
            <person name="Chakrabarti K."/>
            <person name="Chatterji S."/>
            <person name="Dewey C."/>
            <person name="Pachter L."/>
            <person name="Bray N."/>
            <person name="Yap V.B."/>
            <person name="Caspi A."/>
            <person name="Tesler G."/>
            <person name="Pevzner P.A."/>
            <person name="Haussler D."/>
            <person name="Roskin K.M."/>
            <person name="Baertsch R."/>
            <person name="Clawson H."/>
            <person name="Furey T.S."/>
            <person name="Hinrichs A.S."/>
            <person name="Karolchik D."/>
            <person name="Kent W.J."/>
            <person name="Rosenbloom K.R."/>
            <person name="Trumbower H."/>
            <person name="Weirauch M."/>
            <person name="Cooper D.N."/>
            <person name="Stenson P.D."/>
            <person name="Ma B."/>
            <person name="Brent M."/>
            <person name="Arumugam M."/>
            <person name="Shteynberg D."/>
            <person name="Copley R.R."/>
            <person name="Taylor M.S."/>
            <person name="Riethman H."/>
            <person name="Mudunuri U."/>
            <person name="Peterson J."/>
            <person name="Guyer M."/>
            <person name="Felsenfeld A."/>
            <person name="Old S."/>
            <person name="Mockrin S."/>
            <person name="Collins F.S."/>
        </authorList>
    </citation>
    <scope>NUCLEOTIDE SEQUENCE [LARGE SCALE GENOMIC DNA]</scope>
    <source>
        <strain>Brown Norway</strain>
    </source>
</reference>
<reference key="2">
    <citation type="submission" date="2005-07" db="EMBL/GenBank/DDBJ databases">
        <authorList>
            <person name="Mural R.J."/>
            <person name="Adams M.D."/>
            <person name="Myers E.W."/>
            <person name="Smith H.O."/>
            <person name="Venter J.C."/>
        </authorList>
    </citation>
    <scope>NUCLEOTIDE SEQUENCE [LARGE SCALE GENOMIC DNA]</scope>
</reference>
<reference key="3">
    <citation type="journal article" date="2004" name="Genome Res.">
        <title>The status, quality, and expansion of the NIH full-length cDNA project: the Mammalian Gene Collection (MGC).</title>
        <authorList>
            <consortium name="The MGC Project Team"/>
        </authorList>
    </citation>
    <scope>NUCLEOTIDE SEQUENCE [LARGE SCALE MRNA]</scope>
    <source>
        <tissue>Prostate</tissue>
    </source>
</reference>
<comment type="function">
    <text evidence="1">Protein kinase activator that acts as a key activator of the integrated stress response (ISR) following various stresses, such as iron deficiency, mitochondrial stress or mitochondrial DNA breaks. Detects impaired protein import and processing in mitochondria, activating the ISR. May also required for the induction of death receptor-mediated apoptosis through the regulation of caspase activation.</text>
</comment>
<comment type="function">
    <molecule>DAP3-binding cell death enhancer 1</molecule>
    <text evidence="1">Protein kinase activator that activates the ISR in response to iron deficiency: iron deficiency impairs mitochondrial import, promoting DELE1 localization at the mitochondrial surface, where it binds and activates EIF2AK1/HRI to trigger the ISR.</text>
</comment>
<comment type="function">
    <molecule>DAP3-binding cell death enhancer 1 short form</molecule>
    <text evidence="1">Protein kinase activator generated by protein cleavage in response to mitochondrial stress, which accumulates in the cytosol and specifically binds to and activates the protein kinase activity of EIF2AK1/HRI (By similarity). It thereby activates the integrated stress response (ISR): EIF2AK1/HRI activation promotes eIF-2-alpha (EIF2S1) phosphorylation, leading to a decrease in global protein synthesis and the induction of selected genes, including the transcription factor ATF4, the master transcriptional regulator of the ISR (By similarity). Also acts as an activator of PRKN-independent mitophagy: activates the protein kinase activity of EIF2AK1/HRI in response to mitochondrial damage, promoting eIF-2-alpha (EIF2S1) phosphorylation, leading to mitochondrial localization of EIF2S1 followed by induction of mitophagy (By similarity).</text>
</comment>
<comment type="subunit">
    <text evidence="1">Interacts with DAP3.</text>
</comment>
<comment type="subunit">
    <molecule>DAP3-binding cell death enhancer 1</molecule>
    <text evidence="1">Interacts (via TPR repeats) with EIF2AK1/HRI; activating the protein kinase activity of EIF2AK1/HRI, thereby promoting the integrated stress response (ISR).</text>
</comment>
<comment type="subunit">
    <molecule>DAP3-binding cell death enhancer 1 short form</molecule>
    <text evidence="1">Homooctamer; oligomerization is required to activate EIF2AK1/HRI. Interacts (via TPR repeats) with EIF2AK1/HRI; activating the protein kinase activity of EIF2AK1/HRI, thereby promoting the integrated stress response (ISR).</text>
</comment>
<comment type="subcellular location">
    <molecule>DAP3-binding cell death enhancer 1</molecule>
    <subcellularLocation>
        <location evidence="1">Mitochondrion</location>
    </subcellularLocation>
    <subcellularLocation>
        <location evidence="1">Mitochondrion outer membrane</location>
    </subcellularLocation>
    <subcellularLocation>
        <location evidence="1">Mitochondrion inner membrane</location>
    </subcellularLocation>
    <text evidence="1">Imported in the mitochondrial matrix in absence of stress, leading to its degradation by LONP1. Localizes at the mitochondrial surface in response to iron deficiency: iron deficiency impairs mitochondrial import, promoting localization at the mitochondrial surface and stabilization. Associates with the mitochondrion inner membrane in response to mitochondrial stress, leading to its proteolytic processing by OMA1, and generation of the AP3-binding cell death enhancer 1 short form (DELE1(S) or S-DELE1).</text>
</comment>
<comment type="subcellular location">
    <molecule>DAP3-binding cell death enhancer 1 short form</molecule>
    <subcellularLocation>
        <location evidence="1">Cytoplasm</location>
        <location evidence="1">Cytosol</location>
    </subcellularLocation>
    <text evidence="1">This short form is generated by proteolytic processing by OMA1 in response to mitochondrial stress, leading to translocation to the cytosol.</text>
</comment>
<comment type="domain">
    <text evidence="1">The TPR repeats bind to and activate EIF2AK1/HRI.</text>
</comment>
<comment type="PTM">
    <molecule>DAP3-binding cell death enhancer 1</molecule>
    <text evidence="1">Unstable protein in absence of stress: imported in the mitochondrial matrix following processing by the mitochondrial-processing peptidase (MPP), where it is degraded by LONP1. Stabilized in response to iron deficiency: iron deficiency impairs mitochondrial import, promoting localization at the mitochondrial surface and stabilization. Cleaved by OMA1 in response to mitochondrial stress, generating the DAP3-binding cell death enhancer 1 short form (DELE1(S) or S-DELE1) that accumulates in the cytosol and activates the protein kinase activity of EIF2AK1/HRI. Protein cleavage by OMA1 can take place at different positions, and apparently does not require a specific sequence motif.</text>
</comment>
<comment type="PTM">
    <molecule>DAP3-binding cell death enhancer 1 short form</molecule>
    <text evidence="1">Ubiquitinated and degraded by the SIFI complex once the mitochondrial stress has been resolved, thereby providing stress response silencing. Within the SIFI complex, UBR4 initiates ubiquitin chain that are further elongated or branched by KCMF1.</text>
</comment>
<comment type="similarity">
    <text evidence="4">Belongs to the DELE1 family.</text>
</comment>
<sequence>MWRLTGILGRALPRLLGPGFRGITPKPTSSDGPQTTSTTLPLPRVNFDRSGSHGSKRNRDPKCCGWKEAFHWMSAHVSPNTLRDAVSWGTLAVLALHLARQIHFHAPLVAGPQSAERCSWHSPLYRFLSSSWWHPHSSLRRHVLPSPDCPAPRNTGLREPRLGQEEPAARSQGLPSDSSLKPGLLNLPEEEPSDFGFLNASRDFTSQAKAAEAGPPGGKNEQDKPKALPLEEAVTSIQQLFQLSVAIAFNFLGTENIKTGDYTAAFSYFQKAADRGYSKAQYNVGLCLEHGRGTPRDLSKAVLFYHLAAVQGHSLAQYRYARCLLQSPGSMSDPERQRAVSLLKQAADSGLTEAQAFLGVLFTKEPHLDEQKAVKYFWLAASNGDSQSRFHLGICYEKGLGVQRNLGEAVKCYQKSAAMGNEPAQERLRTLFNVEAAGPSHLAIGLKSFSSPSLCSLNTFLAGASGLPHASSTGNLGLLCRSGHLGTSHGAPSRAMPSLERSLVRLGFG</sequence>
<dbReference type="EMBL" id="AABR07031745">
    <property type="status" value="NOT_ANNOTATED_CDS"/>
    <property type="molecule type" value="Genomic_DNA"/>
</dbReference>
<dbReference type="EMBL" id="CH473974">
    <property type="protein sequence ID" value="EDL76436.1"/>
    <property type="molecule type" value="Genomic_DNA"/>
</dbReference>
<dbReference type="EMBL" id="BC064660">
    <property type="protein sequence ID" value="AAH64660.1"/>
    <property type="molecule type" value="mRNA"/>
</dbReference>
<dbReference type="RefSeq" id="NP_955787.1">
    <property type="nucleotide sequence ID" value="NM_199493.1"/>
</dbReference>
<dbReference type="RefSeq" id="XP_063133438.1">
    <property type="nucleotide sequence ID" value="XM_063277368.1"/>
</dbReference>
<dbReference type="SMR" id="P60924"/>
<dbReference type="FunCoup" id="P60924">
    <property type="interactions" value="1314"/>
</dbReference>
<dbReference type="STRING" id="10116.ENSRNOP00000026273"/>
<dbReference type="iPTMnet" id="P60924"/>
<dbReference type="PhosphoSitePlus" id="P60924"/>
<dbReference type="PaxDb" id="10116-ENSRNOP00000026273"/>
<dbReference type="Ensembl" id="ENSRNOT00000026273.8">
    <property type="protein sequence ID" value="ENSRNOP00000026273.4"/>
    <property type="gene ID" value="ENSRNOG00000019276.8"/>
</dbReference>
<dbReference type="GeneID" id="307480"/>
<dbReference type="KEGG" id="rno:307480"/>
<dbReference type="UCSC" id="RGD:735029">
    <property type="organism name" value="rat"/>
</dbReference>
<dbReference type="AGR" id="RGD:735029"/>
<dbReference type="CTD" id="9812"/>
<dbReference type="RGD" id="735029">
    <property type="gene designation" value="Dele1"/>
</dbReference>
<dbReference type="eggNOG" id="KOG1550">
    <property type="taxonomic scope" value="Eukaryota"/>
</dbReference>
<dbReference type="GeneTree" id="ENSGT00390000002137"/>
<dbReference type="HOGENOM" id="CLU_039734_0_0_1"/>
<dbReference type="InParanoid" id="P60924"/>
<dbReference type="OMA" id="HAWSTGN"/>
<dbReference type="PhylomeDB" id="P60924"/>
<dbReference type="TreeFam" id="TF329996"/>
<dbReference type="Reactome" id="R-RNO-9840373">
    <property type="pathway name" value="Cellular response to mitochondrial stress"/>
</dbReference>
<dbReference type="PRO" id="PR:P60924"/>
<dbReference type="Proteomes" id="UP000002494">
    <property type="component" value="Chromosome 18"/>
</dbReference>
<dbReference type="Proteomes" id="UP000234681">
    <property type="component" value="Chromosome 18"/>
</dbReference>
<dbReference type="Bgee" id="ENSRNOG00000019276">
    <property type="expression patterns" value="Expressed in heart and 18 other cell types or tissues"/>
</dbReference>
<dbReference type="GO" id="GO:0005829">
    <property type="term" value="C:cytosol"/>
    <property type="evidence" value="ECO:0000266"/>
    <property type="project" value="RGD"/>
</dbReference>
<dbReference type="GO" id="GO:0005743">
    <property type="term" value="C:mitochondrial inner membrane"/>
    <property type="evidence" value="ECO:0007669"/>
    <property type="project" value="UniProtKB-SubCell"/>
</dbReference>
<dbReference type="GO" id="GO:0005741">
    <property type="term" value="C:mitochondrial outer membrane"/>
    <property type="evidence" value="ECO:0000266"/>
    <property type="project" value="RGD"/>
</dbReference>
<dbReference type="GO" id="GO:0005739">
    <property type="term" value="C:mitochondrion"/>
    <property type="evidence" value="ECO:0000250"/>
    <property type="project" value="UniProtKB"/>
</dbReference>
<dbReference type="GO" id="GO:0043539">
    <property type="term" value="F:protein serine/threonine kinase activator activity"/>
    <property type="evidence" value="ECO:0000266"/>
    <property type="project" value="RGD"/>
</dbReference>
<dbReference type="GO" id="GO:0033554">
    <property type="term" value="P:cellular response to stress"/>
    <property type="evidence" value="ECO:0000266"/>
    <property type="project" value="RGD"/>
</dbReference>
<dbReference type="GO" id="GO:0006974">
    <property type="term" value="P:DNA damage response"/>
    <property type="evidence" value="ECO:0000250"/>
    <property type="project" value="UniProtKB"/>
</dbReference>
<dbReference type="GO" id="GO:0008625">
    <property type="term" value="P:extrinsic apoptotic signaling pathway via death domain receptors"/>
    <property type="evidence" value="ECO:0000250"/>
    <property type="project" value="UniProtKB"/>
</dbReference>
<dbReference type="GO" id="GO:0140468">
    <property type="term" value="P:HRI-mediated signaling"/>
    <property type="evidence" value="ECO:0000266"/>
    <property type="project" value="RGD"/>
</dbReference>
<dbReference type="GO" id="GO:0140467">
    <property type="term" value="P:integrated stress response signaling"/>
    <property type="evidence" value="ECO:0000266"/>
    <property type="project" value="RGD"/>
</dbReference>
<dbReference type="GO" id="GO:1901526">
    <property type="term" value="P:positive regulation of mitophagy"/>
    <property type="evidence" value="ECO:0000266"/>
    <property type="project" value="RGD"/>
</dbReference>
<dbReference type="GO" id="GO:1990641">
    <property type="term" value="P:response to iron ion starvation"/>
    <property type="evidence" value="ECO:0000266"/>
    <property type="project" value="RGD"/>
</dbReference>
<dbReference type="FunFam" id="1.25.40.10:FF:000267">
    <property type="entry name" value="DAP3 binding cell death enhancer 1"/>
    <property type="match status" value="1"/>
</dbReference>
<dbReference type="Gene3D" id="1.25.40.10">
    <property type="entry name" value="Tetratricopeptide repeat domain"/>
    <property type="match status" value="1"/>
</dbReference>
<dbReference type="InterPro" id="IPR052748">
    <property type="entry name" value="ISR_Activator"/>
</dbReference>
<dbReference type="InterPro" id="IPR006597">
    <property type="entry name" value="Sel1-like"/>
</dbReference>
<dbReference type="InterPro" id="IPR011990">
    <property type="entry name" value="TPR-like_helical_dom_sf"/>
</dbReference>
<dbReference type="PANTHER" id="PTHR45011">
    <property type="entry name" value="DAP3-BINDING CELL DEATH ENHANCER 1"/>
    <property type="match status" value="1"/>
</dbReference>
<dbReference type="PANTHER" id="PTHR45011:SF1">
    <property type="entry name" value="DAP3-BINDING CELL DEATH ENHANCER 1"/>
    <property type="match status" value="1"/>
</dbReference>
<dbReference type="Pfam" id="PF08238">
    <property type="entry name" value="Sel1"/>
    <property type="match status" value="5"/>
</dbReference>
<dbReference type="SMART" id="SM00671">
    <property type="entry name" value="SEL1"/>
    <property type="match status" value="5"/>
</dbReference>
<dbReference type="SUPFAM" id="SSF81901">
    <property type="entry name" value="HCP-like"/>
    <property type="match status" value="1"/>
</dbReference>